<reference key="1">
    <citation type="journal article" date="1987" name="Nature">
        <title>A bacterial calcium-binding protein homologous to calmodulin.</title>
        <authorList>
            <person name="Swan D.G."/>
            <person name="Hale R.S."/>
            <person name="Dhillon N."/>
            <person name="Leadlay P.F."/>
        </authorList>
    </citation>
    <scope>NUCLEOTIDE SEQUENCE [GENOMIC DNA]</scope>
</reference>
<reference key="2">
    <citation type="journal article" date="1989" name="J. Bacteriol.">
        <title>Cloning, characterization, and heterologous expression of the Saccharopolyspora erythraea (Streptomyces erythraeus) gene encoding an EF-hand calcium-binding protein.</title>
        <authorList>
            <person name="Swan D.G."/>
            <person name="Cortes J."/>
            <person name="Hale R.S."/>
            <person name="Leadlay P.F."/>
        </authorList>
    </citation>
    <scope>NUCLEOTIDE SEQUENCE [GENOMIC DNA]</scope>
</reference>
<feature type="chain" id="PRO_0000073580" description="Calerythrin">
    <location>
        <begin position="1"/>
        <end position="177"/>
    </location>
</feature>
<feature type="domain" description="EF-hand 1" evidence="1">
    <location>
        <begin position="5"/>
        <end position="40"/>
    </location>
</feature>
<feature type="domain" description="EF-hand 2" evidence="2">
    <location>
        <begin position="45"/>
        <end position="90"/>
    </location>
</feature>
<feature type="domain" description="EF-hand 3" evidence="1">
    <location>
        <begin position="100"/>
        <end position="134"/>
    </location>
</feature>
<feature type="domain" description="EF-hand 4" evidence="1">
    <location>
        <begin position="134"/>
        <end position="169"/>
    </location>
</feature>
<feature type="binding site" evidence="1">
    <location>
        <position position="18"/>
    </location>
    <ligand>
        <name>Ca(2+)</name>
        <dbReference type="ChEBI" id="CHEBI:29108"/>
        <label>1</label>
    </ligand>
</feature>
<feature type="binding site" evidence="1">
    <location>
        <position position="20"/>
    </location>
    <ligand>
        <name>Ca(2+)</name>
        <dbReference type="ChEBI" id="CHEBI:29108"/>
        <label>1</label>
    </ligand>
</feature>
<feature type="binding site" evidence="1">
    <location>
        <position position="22"/>
    </location>
    <ligand>
        <name>Ca(2+)</name>
        <dbReference type="ChEBI" id="CHEBI:29108"/>
        <label>1</label>
    </ligand>
</feature>
<feature type="binding site" evidence="1">
    <location>
        <position position="29"/>
    </location>
    <ligand>
        <name>Ca(2+)</name>
        <dbReference type="ChEBI" id="CHEBI:29108"/>
        <label>1</label>
    </ligand>
</feature>
<feature type="binding site" evidence="1">
    <location>
        <position position="113"/>
    </location>
    <ligand>
        <name>Ca(2+)</name>
        <dbReference type="ChEBI" id="CHEBI:29108"/>
        <label>2</label>
    </ligand>
</feature>
<feature type="binding site" evidence="1">
    <location>
        <position position="115"/>
    </location>
    <ligand>
        <name>Ca(2+)</name>
        <dbReference type="ChEBI" id="CHEBI:29108"/>
        <label>2</label>
    </ligand>
</feature>
<feature type="binding site" evidence="1">
    <location>
        <position position="117"/>
    </location>
    <ligand>
        <name>Ca(2+)</name>
        <dbReference type="ChEBI" id="CHEBI:29108"/>
        <label>2</label>
    </ligand>
</feature>
<feature type="binding site" evidence="1">
    <location>
        <position position="119"/>
    </location>
    <ligand>
        <name>Ca(2+)</name>
        <dbReference type="ChEBI" id="CHEBI:29108"/>
        <label>2</label>
    </ligand>
</feature>
<feature type="binding site" evidence="1">
    <location>
        <position position="124"/>
    </location>
    <ligand>
        <name>Ca(2+)</name>
        <dbReference type="ChEBI" id="CHEBI:29108"/>
        <label>2</label>
    </ligand>
</feature>
<feature type="binding site" evidence="1">
    <location>
        <position position="147"/>
    </location>
    <ligand>
        <name>Ca(2+)</name>
        <dbReference type="ChEBI" id="CHEBI:29108"/>
        <label>3</label>
    </ligand>
</feature>
<feature type="binding site" evidence="1">
    <location>
        <position position="149"/>
    </location>
    <ligand>
        <name>Ca(2+)</name>
        <dbReference type="ChEBI" id="CHEBI:29108"/>
        <label>3</label>
    </ligand>
</feature>
<feature type="binding site" evidence="1">
    <location>
        <position position="151"/>
    </location>
    <ligand>
        <name>Ca(2+)</name>
        <dbReference type="ChEBI" id="CHEBI:29108"/>
        <label>3</label>
    </ligand>
</feature>
<feature type="binding site" evidence="1">
    <location>
        <position position="153"/>
    </location>
    <ligand>
        <name>Ca(2+)</name>
        <dbReference type="ChEBI" id="CHEBI:29108"/>
        <label>3</label>
    </ligand>
</feature>
<feature type="binding site" evidence="1">
    <location>
        <position position="158"/>
    </location>
    <ligand>
        <name>Ca(2+)</name>
        <dbReference type="ChEBI" id="CHEBI:29108"/>
        <label>3</label>
    </ligand>
</feature>
<feature type="helix" evidence="3">
    <location>
        <begin position="5"/>
        <end position="16"/>
    </location>
</feature>
<feature type="strand" evidence="3">
    <location>
        <begin position="23"/>
        <end position="25"/>
    </location>
</feature>
<feature type="helix" evidence="3">
    <location>
        <begin position="28"/>
        <end position="40"/>
    </location>
</feature>
<feature type="strand" evidence="3">
    <location>
        <begin position="45"/>
        <end position="47"/>
    </location>
</feature>
<feature type="helix" evidence="3">
    <location>
        <begin position="48"/>
        <end position="68"/>
    </location>
</feature>
<feature type="helix" evidence="3">
    <location>
        <begin position="78"/>
        <end position="89"/>
    </location>
</feature>
<feature type="strand" evidence="3">
    <location>
        <begin position="90"/>
        <end position="92"/>
    </location>
</feature>
<feature type="helix" evidence="3">
    <location>
        <begin position="94"/>
        <end position="111"/>
    </location>
</feature>
<feature type="strand" evidence="3">
    <location>
        <begin position="118"/>
        <end position="121"/>
    </location>
</feature>
<feature type="helix" evidence="3">
    <location>
        <begin position="122"/>
        <end position="131"/>
    </location>
</feature>
<feature type="helix" evidence="3">
    <location>
        <begin position="136"/>
        <end position="146"/>
    </location>
</feature>
<feature type="strand" evidence="3">
    <location>
        <begin position="151"/>
        <end position="155"/>
    </location>
</feature>
<feature type="helix" evidence="3">
    <location>
        <begin position="156"/>
        <end position="163"/>
    </location>
</feature>
<feature type="strand" evidence="3">
    <location>
        <begin position="167"/>
        <end position="169"/>
    </location>
</feature>
<name>CBP_SACER</name>
<comment type="miscellaneous">
    <text>This protein binds calcium.</text>
</comment>
<organism>
    <name type="scientific">Saccharopolyspora erythraea</name>
    <name type="common">Streptomyces erythraeus</name>
    <dbReference type="NCBI Taxonomy" id="1836"/>
    <lineage>
        <taxon>Bacteria</taxon>
        <taxon>Bacillati</taxon>
        <taxon>Actinomycetota</taxon>
        <taxon>Actinomycetes</taxon>
        <taxon>Pseudonocardiales</taxon>
        <taxon>Pseudonocardiaceae</taxon>
        <taxon>Saccharopolyspora</taxon>
    </lineage>
</organism>
<proteinExistence type="evidence at protein level"/>
<dbReference type="EMBL" id="M29700">
    <property type="protein sequence ID" value="AAA26481.1"/>
    <property type="molecule type" value="Genomic_DNA"/>
</dbReference>
<dbReference type="PIR" id="A45916">
    <property type="entry name" value="A29289"/>
</dbReference>
<dbReference type="PDB" id="1NYA">
    <property type="method" value="NMR"/>
    <property type="chains" value="A=2-177"/>
</dbReference>
<dbReference type="PDBsum" id="1NYA"/>
<dbReference type="BMRB" id="P06495"/>
<dbReference type="SMR" id="P06495"/>
<dbReference type="EvolutionaryTrace" id="P06495"/>
<dbReference type="GO" id="GO:0005509">
    <property type="term" value="F:calcium ion binding"/>
    <property type="evidence" value="ECO:0007669"/>
    <property type="project" value="InterPro"/>
</dbReference>
<dbReference type="CDD" id="cd00051">
    <property type="entry name" value="EFh"/>
    <property type="match status" value="1"/>
</dbReference>
<dbReference type="Gene3D" id="1.10.238.10">
    <property type="entry name" value="EF-hand"/>
    <property type="match status" value="1"/>
</dbReference>
<dbReference type="InterPro" id="IPR011992">
    <property type="entry name" value="EF-hand-dom_pair"/>
</dbReference>
<dbReference type="InterPro" id="IPR018247">
    <property type="entry name" value="EF_Hand_1_Ca_BS"/>
</dbReference>
<dbReference type="InterPro" id="IPR002048">
    <property type="entry name" value="EF_hand_dom"/>
</dbReference>
<dbReference type="Pfam" id="PF13499">
    <property type="entry name" value="EF-hand_7"/>
    <property type="match status" value="1"/>
</dbReference>
<dbReference type="SMART" id="SM00054">
    <property type="entry name" value="EFh"/>
    <property type="match status" value="3"/>
</dbReference>
<dbReference type="SUPFAM" id="SSF47473">
    <property type="entry name" value="EF-hand"/>
    <property type="match status" value="1"/>
</dbReference>
<dbReference type="PROSITE" id="PS00018">
    <property type="entry name" value="EF_HAND_1"/>
    <property type="match status" value="3"/>
</dbReference>
<dbReference type="PROSITE" id="PS50222">
    <property type="entry name" value="EF_HAND_2"/>
    <property type="match status" value="3"/>
</dbReference>
<evidence type="ECO:0000255" key="1">
    <source>
        <dbReference type="PROSITE-ProRule" id="PRU00448"/>
    </source>
</evidence>
<evidence type="ECO:0000305" key="2"/>
<evidence type="ECO:0007829" key="3">
    <source>
        <dbReference type="PDB" id="1NYA"/>
    </source>
</evidence>
<sequence>MTTAIASDRLKKRFDRWDFDGNGALERADFEKEAQHIAEAFGKDAGAAEVQTLKNAFGGLFDYLAKEAGVGSDGSLTEEQFIRVTENLIFEQGEASFNRVLGPVVKGTWGMCDKNADGQINADEFAAWLTALGMSKAEAAEAFNQVDTNGNGELSLDELLTAVRDFHFGRLDVELLG</sequence>
<protein>
    <recommendedName>
        <fullName>Calerythrin</fullName>
    </recommendedName>
    <alternativeName>
        <fullName>Calcium-binding protein</fullName>
    </alternativeName>
</protein>
<keyword id="KW-0002">3D-structure</keyword>
<keyword id="KW-0106">Calcium</keyword>
<keyword id="KW-0479">Metal-binding</keyword>
<keyword id="KW-0677">Repeat</keyword>
<accession>P06495</accession>